<organism>
    <name type="scientific">Methanoculleus marisnigri (strain ATCC 35101 / DSM 1498 / JR1)</name>
    <dbReference type="NCBI Taxonomy" id="368407"/>
    <lineage>
        <taxon>Archaea</taxon>
        <taxon>Methanobacteriati</taxon>
        <taxon>Methanobacteriota</taxon>
        <taxon>Stenosarchaea group</taxon>
        <taxon>Methanomicrobia</taxon>
        <taxon>Methanomicrobiales</taxon>
        <taxon>Methanomicrobiaceae</taxon>
        <taxon>Methanoculleus</taxon>
    </lineage>
</organism>
<reference key="1">
    <citation type="journal article" date="2009" name="Stand. Genomic Sci.">
        <title>Complete genome sequence of Methanoculleus marisnigri Romesser et al. 1981 type strain JR1.</title>
        <authorList>
            <person name="Anderson I.J."/>
            <person name="Sieprawska-Lupa M."/>
            <person name="Lapidus A."/>
            <person name="Nolan M."/>
            <person name="Copeland A."/>
            <person name="Glavina Del Rio T."/>
            <person name="Tice H."/>
            <person name="Dalin E."/>
            <person name="Barry K."/>
            <person name="Saunders E."/>
            <person name="Han C."/>
            <person name="Brettin T."/>
            <person name="Detter J.C."/>
            <person name="Bruce D."/>
            <person name="Mikhailova N."/>
            <person name="Pitluck S."/>
            <person name="Hauser L."/>
            <person name="Land M."/>
            <person name="Lucas S."/>
            <person name="Richardson P."/>
            <person name="Whitman W.B."/>
            <person name="Kyrpides N.C."/>
        </authorList>
    </citation>
    <scope>NUCLEOTIDE SEQUENCE [LARGE SCALE GENOMIC DNA]</scope>
    <source>
        <strain>ATCC 35101 / DSM 1498 / JR1</strain>
    </source>
</reference>
<proteinExistence type="inferred from homology"/>
<comment type="function">
    <text evidence="1">Stabilizes TBP binding to an archaeal box-A promoter. Also responsible for recruiting RNA polymerase II to the pre-initiation complex (DNA-TBP-TFIIB).</text>
</comment>
<comment type="similarity">
    <text evidence="1">Belongs to the TFIIB family.</text>
</comment>
<gene>
    <name evidence="1" type="primary">tfb</name>
    <name type="ordered locus">Memar_0473</name>
</gene>
<protein>
    <recommendedName>
        <fullName evidence="1">Transcription initiation factor IIB</fullName>
        <shortName evidence="1">TFIIB</shortName>
    </recommendedName>
</protein>
<dbReference type="EMBL" id="CP000562">
    <property type="protein sequence ID" value="ABN56406.1"/>
    <property type="molecule type" value="Genomic_DNA"/>
</dbReference>
<dbReference type="RefSeq" id="WP_011843316.1">
    <property type="nucleotide sequence ID" value="NC_009051.1"/>
</dbReference>
<dbReference type="SMR" id="A3CSQ6"/>
<dbReference type="STRING" id="368407.Memar_0473"/>
<dbReference type="KEGG" id="mem:Memar_0473"/>
<dbReference type="eggNOG" id="arCOG01981">
    <property type="taxonomic scope" value="Archaea"/>
</dbReference>
<dbReference type="HOGENOM" id="CLU_043736_0_1_2"/>
<dbReference type="OrthoDB" id="7429at2157"/>
<dbReference type="Proteomes" id="UP000002146">
    <property type="component" value="Chromosome"/>
</dbReference>
<dbReference type="GO" id="GO:0097550">
    <property type="term" value="C:transcription preinitiation complex"/>
    <property type="evidence" value="ECO:0007669"/>
    <property type="project" value="TreeGrafter"/>
</dbReference>
<dbReference type="GO" id="GO:0003700">
    <property type="term" value="F:DNA-binding transcription factor activity"/>
    <property type="evidence" value="ECO:0007669"/>
    <property type="project" value="UniProtKB-UniRule"/>
</dbReference>
<dbReference type="GO" id="GO:0017025">
    <property type="term" value="F:TBP-class protein binding"/>
    <property type="evidence" value="ECO:0007669"/>
    <property type="project" value="InterPro"/>
</dbReference>
<dbReference type="GO" id="GO:0008270">
    <property type="term" value="F:zinc ion binding"/>
    <property type="evidence" value="ECO:0007669"/>
    <property type="project" value="UniProtKB-UniRule"/>
</dbReference>
<dbReference type="GO" id="GO:0070897">
    <property type="term" value="P:transcription preinitiation complex assembly"/>
    <property type="evidence" value="ECO:0007669"/>
    <property type="project" value="InterPro"/>
</dbReference>
<dbReference type="CDD" id="cd20549">
    <property type="entry name" value="CYCLIN_TFIIB_archaea_like_rpt1"/>
    <property type="match status" value="1"/>
</dbReference>
<dbReference type="CDD" id="cd20550">
    <property type="entry name" value="CYCLIN_TFIIB_archaea_like_rpt2"/>
    <property type="match status" value="1"/>
</dbReference>
<dbReference type="FunFam" id="1.10.472.10:FF:000023">
    <property type="entry name" value="Transcription initiation factor IIB"/>
    <property type="match status" value="1"/>
</dbReference>
<dbReference type="FunFam" id="1.10.472.170:FF:000001">
    <property type="entry name" value="Transcription initiation factor IIB"/>
    <property type="match status" value="1"/>
</dbReference>
<dbReference type="Gene3D" id="1.10.472.170">
    <property type="match status" value="1"/>
</dbReference>
<dbReference type="Gene3D" id="1.10.472.10">
    <property type="entry name" value="Cyclin-like"/>
    <property type="match status" value="1"/>
</dbReference>
<dbReference type="HAMAP" id="MF_00383">
    <property type="entry name" value="TF2B_arch"/>
    <property type="match status" value="1"/>
</dbReference>
<dbReference type="InterPro" id="IPR013763">
    <property type="entry name" value="Cyclin-like_dom"/>
</dbReference>
<dbReference type="InterPro" id="IPR036915">
    <property type="entry name" value="Cyclin-like_sf"/>
</dbReference>
<dbReference type="InterPro" id="IPR000812">
    <property type="entry name" value="TFIIB"/>
</dbReference>
<dbReference type="InterPro" id="IPR023484">
    <property type="entry name" value="TFIIB_arc"/>
</dbReference>
<dbReference type="InterPro" id="IPR023486">
    <property type="entry name" value="TFIIB_CS"/>
</dbReference>
<dbReference type="InterPro" id="IPR013150">
    <property type="entry name" value="TFIIB_cyclin"/>
</dbReference>
<dbReference type="InterPro" id="IPR013137">
    <property type="entry name" value="Znf_TFIIB"/>
</dbReference>
<dbReference type="NCBIfam" id="NF001658">
    <property type="entry name" value="PRK00423.1"/>
    <property type="match status" value="1"/>
</dbReference>
<dbReference type="PANTHER" id="PTHR11618:SF13">
    <property type="entry name" value="TRANSCRIPTION INITIATION FACTOR IIB"/>
    <property type="match status" value="1"/>
</dbReference>
<dbReference type="PANTHER" id="PTHR11618">
    <property type="entry name" value="TRANSCRIPTION INITIATION FACTOR IIB-RELATED"/>
    <property type="match status" value="1"/>
</dbReference>
<dbReference type="Pfam" id="PF00382">
    <property type="entry name" value="TFIIB"/>
    <property type="match status" value="2"/>
</dbReference>
<dbReference type="Pfam" id="PF08271">
    <property type="entry name" value="Zn_Ribbon_TF"/>
    <property type="match status" value="1"/>
</dbReference>
<dbReference type="PRINTS" id="PR00685">
    <property type="entry name" value="TIFACTORIIB"/>
</dbReference>
<dbReference type="SMART" id="SM00385">
    <property type="entry name" value="CYCLIN"/>
    <property type="match status" value="2"/>
</dbReference>
<dbReference type="SUPFAM" id="SSF47954">
    <property type="entry name" value="Cyclin-like"/>
    <property type="match status" value="2"/>
</dbReference>
<dbReference type="SUPFAM" id="SSF57783">
    <property type="entry name" value="Zinc beta-ribbon"/>
    <property type="match status" value="1"/>
</dbReference>
<dbReference type="PROSITE" id="PS00782">
    <property type="entry name" value="TFIIB"/>
    <property type="match status" value="2"/>
</dbReference>
<dbReference type="PROSITE" id="PS51134">
    <property type="entry name" value="ZF_TFIIB"/>
    <property type="match status" value="1"/>
</dbReference>
<accession>A3CSQ6</accession>
<evidence type="ECO:0000255" key="1">
    <source>
        <dbReference type="HAMAP-Rule" id="MF_00383"/>
    </source>
</evidence>
<evidence type="ECO:0000255" key="2">
    <source>
        <dbReference type="PROSITE-ProRule" id="PRU00469"/>
    </source>
</evidence>
<name>TF2B_METMJ</name>
<keyword id="KW-0479">Metal-binding</keyword>
<keyword id="KW-0677">Repeat</keyword>
<keyword id="KW-0804">Transcription</keyword>
<keyword id="KW-0805">Transcription regulation</keyword>
<keyword id="KW-0862">Zinc</keyword>
<keyword id="KW-0863">Zinc-finger</keyword>
<feature type="chain" id="PRO_1000080110" description="Transcription initiation factor IIB">
    <location>
        <begin position="1"/>
        <end position="337"/>
    </location>
</feature>
<feature type="repeat" description="1">
    <location>
        <begin position="154"/>
        <end position="237"/>
    </location>
</feature>
<feature type="repeat" description="2">
    <location>
        <begin position="248"/>
        <end position="329"/>
    </location>
</feature>
<feature type="zinc finger region" description="TFIIB-type" evidence="2">
    <location>
        <begin position="36"/>
        <end position="68"/>
    </location>
</feature>
<feature type="binding site" evidence="2">
    <location>
        <position position="41"/>
    </location>
    <ligand>
        <name>Zn(2+)</name>
        <dbReference type="ChEBI" id="CHEBI:29105"/>
    </ligand>
</feature>
<feature type="binding site" evidence="2">
    <location>
        <position position="44"/>
    </location>
    <ligand>
        <name>Zn(2+)</name>
        <dbReference type="ChEBI" id="CHEBI:29105"/>
    </ligand>
</feature>
<feature type="binding site" evidence="2">
    <location>
        <position position="60"/>
    </location>
    <ligand>
        <name>Zn(2+)</name>
        <dbReference type="ChEBI" id="CHEBI:29105"/>
    </ligand>
</feature>
<feature type="binding site" evidence="2">
    <location>
        <position position="63"/>
    </location>
    <ligand>
        <name>Zn(2+)</name>
        <dbReference type="ChEBI" id="CHEBI:29105"/>
    </ligand>
</feature>
<sequence length="337" mass="38278">MAEVEKLKQLQLQREALKKRGEQKVKETEKKRTEESVQSVCPECGSRQLVHDYERAELVCQNCGLVLDEEFIDRGPEWRAFDHDQRMKRSRVGAPMTFTIHDKGLSTMIDWRNRDSYGRAISSKNRAQLYRLRKWQRRIRVSNATERNLAFALSELDRMASALGLPRNVRETAAVVYRDAVDKNLIRGRSIEGVAAAALYAACRQCSVPRTLDEIAEVSRVSRKEIGRTYRFISRELGLKLLPTSPIDYVPRFCSGLNLKGEVQSRAVEILRQAGERELTSGRGPTGVAAAAIYISSILGGERRTQREVAEVAGVTEVTIRNRYKELAEKLDIEIIL</sequence>